<comment type="function">
    <text evidence="1">Contributes to K(+)/H(+) antiport activity by supporting proton efflux to control proton extrusion and homeostasis in chloroplasts in a light-dependent manner to modulate photosynthesis. Prevents excessive induction of non-photochemical quenching (NPQ) under continuous-light conditions. Indirectly promotes efficient inorganic carbon uptake into chloroplasts.</text>
</comment>
<comment type="catalytic activity">
    <reaction evidence="1">
        <text>K(+)(in) + H(+)(out) = K(+)(out) + H(+)(in)</text>
        <dbReference type="Rhea" id="RHEA:29467"/>
        <dbReference type="ChEBI" id="CHEBI:15378"/>
        <dbReference type="ChEBI" id="CHEBI:29103"/>
    </reaction>
</comment>
<comment type="subcellular location">
    <subcellularLocation>
        <location evidence="1">Plastid</location>
        <location evidence="1">Chloroplast inner membrane</location>
        <topology evidence="1">Multi-pass membrane protein</topology>
    </subcellularLocation>
</comment>
<comment type="similarity">
    <text evidence="1 2">Belongs to the CemA family.</text>
</comment>
<feature type="chain" id="PRO_0000216634" description="Potassium/proton antiporter CemA">
    <location>
        <begin position="1"/>
        <end position="229"/>
    </location>
</feature>
<feature type="transmembrane region" description="Helical" evidence="1">
    <location>
        <begin position="7"/>
        <end position="27"/>
    </location>
</feature>
<feature type="transmembrane region" description="Helical" evidence="1">
    <location>
        <begin position="107"/>
        <end position="127"/>
    </location>
</feature>
<feature type="transmembrane region" description="Helical" evidence="1">
    <location>
        <begin position="189"/>
        <end position="209"/>
    </location>
</feature>
<organism>
    <name type="scientific">Atropa belladonna</name>
    <name type="common">Belladonna</name>
    <name type="synonym">Deadly nightshade</name>
    <dbReference type="NCBI Taxonomy" id="33113"/>
    <lineage>
        <taxon>Eukaryota</taxon>
        <taxon>Viridiplantae</taxon>
        <taxon>Streptophyta</taxon>
        <taxon>Embryophyta</taxon>
        <taxon>Tracheophyta</taxon>
        <taxon>Spermatophyta</taxon>
        <taxon>Magnoliopsida</taxon>
        <taxon>eudicotyledons</taxon>
        <taxon>Gunneridae</taxon>
        <taxon>Pentapetalae</taxon>
        <taxon>asterids</taxon>
        <taxon>lamiids</taxon>
        <taxon>Solanales</taxon>
        <taxon>Solanaceae</taxon>
        <taxon>Solanoideae</taxon>
        <taxon>Hyoscyameae</taxon>
        <taxon>Atropa</taxon>
    </lineage>
</organism>
<dbReference type="EMBL" id="AJ316582">
    <property type="protein sequence ID" value="CAC88056.1"/>
    <property type="molecule type" value="Genomic_DNA"/>
</dbReference>
<dbReference type="RefSeq" id="NP_783244.1">
    <property type="nucleotide sequence ID" value="NC_004561.1"/>
</dbReference>
<dbReference type="GeneID" id="806464"/>
<dbReference type="GO" id="GO:0009706">
    <property type="term" value="C:chloroplast inner membrane"/>
    <property type="evidence" value="ECO:0007669"/>
    <property type="project" value="UniProtKB-SubCell"/>
</dbReference>
<dbReference type="GO" id="GO:0015297">
    <property type="term" value="F:antiporter activity"/>
    <property type="evidence" value="ECO:0007669"/>
    <property type="project" value="UniProtKB-KW"/>
</dbReference>
<dbReference type="GO" id="GO:0015078">
    <property type="term" value="F:proton transmembrane transporter activity"/>
    <property type="evidence" value="ECO:0007669"/>
    <property type="project" value="UniProtKB-UniRule"/>
</dbReference>
<dbReference type="GO" id="GO:0006813">
    <property type="term" value="P:potassium ion transport"/>
    <property type="evidence" value="ECO:0007669"/>
    <property type="project" value="UniProtKB-UniRule"/>
</dbReference>
<dbReference type="HAMAP" id="MF_01308">
    <property type="entry name" value="CemA_PxcA"/>
    <property type="match status" value="1"/>
</dbReference>
<dbReference type="InterPro" id="IPR004282">
    <property type="entry name" value="CemA"/>
</dbReference>
<dbReference type="PANTHER" id="PTHR33650:SF2">
    <property type="entry name" value="CHLOROPLAST ENVELOPE MEMBRANE PROTEIN"/>
    <property type="match status" value="1"/>
</dbReference>
<dbReference type="PANTHER" id="PTHR33650">
    <property type="entry name" value="CHLOROPLAST ENVELOPE MEMBRANE PROTEIN-RELATED"/>
    <property type="match status" value="1"/>
</dbReference>
<dbReference type="Pfam" id="PF03040">
    <property type="entry name" value="CemA"/>
    <property type="match status" value="1"/>
</dbReference>
<gene>
    <name evidence="1" type="primary">cemA</name>
</gene>
<geneLocation type="chloroplast"/>
<protein>
    <recommendedName>
        <fullName evidence="1">Potassium/proton antiporter CemA</fullName>
    </recommendedName>
    <alternativeName>
        <fullName evidence="1">Chloroplast envelope membrane protein A</fullName>
        <shortName evidence="1">CemA</shortName>
    </alternativeName>
</protein>
<proteinExistence type="inferred from homology"/>
<keyword id="KW-0050">Antiport</keyword>
<keyword id="KW-0150">Chloroplast</keyword>
<keyword id="KW-0375">Hydrogen ion transport</keyword>
<keyword id="KW-0406">Ion transport</keyword>
<keyword id="KW-0472">Membrane</keyword>
<keyword id="KW-0934">Plastid</keyword>
<keyword id="KW-1001">Plastid inner membrane</keyword>
<keyword id="KW-0630">Potassium</keyword>
<keyword id="KW-0633">Potassium transport</keyword>
<keyword id="KW-0812">Transmembrane</keyword>
<keyword id="KW-1133">Transmembrane helix</keyword>
<keyword id="KW-0813">Transport</keyword>
<sequence length="229" mass="26794">MAKKKAFTPLFYLASIVFLPWWISFSVNKCLESWVTNWWNTGQSEIFLNNIQEKSLLEKFIELEELLLLDEMIKEYSETHLEEFGIGIHKETIQLIKIQNENRIHTILHFSTNIICFIILSGYSILGNEKLVILNSWAQEFLYNLSDTVKAFSILLLTDLCIGFHSPHGWELMIGSIYKDFGFVHNDQIISGLVSTFPVILDTIFKYWIFRYLNRLSPSLVVIYHSMND</sequence>
<accession>Q8S8W5</accession>
<name>CEMA_ATRBE</name>
<evidence type="ECO:0000255" key="1">
    <source>
        <dbReference type="HAMAP-Rule" id="MF_01308"/>
    </source>
</evidence>
<evidence type="ECO:0000305" key="2"/>
<reference key="1">
    <citation type="journal article" date="2002" name="Mol. Biol. Evol.">
        <title>The plastid chromosome of Atropa belladonna and its comparison with that of Nicotiana tabacum: the role of RNA editing in generating divergence in the process of plant speciation.</title>
        <authorList>
            <person name="Schmitz-Linneweber C."/>
            <person name="Regel R."/>
            <person name="Du T.G."/>
            <person name="Hupfer H."/>
            <person name="Herrmann R.G."/>
            <person name="Maier R.M."/>
        </authorList>
    </citation>
    <scope>NUCLEOTIDE SEQUENCE [LARGE SCALE GENOMIC DNA]</scope>
    <source>
        <strain>cv. Ab5p(kan)</strain>
    </source>
</reference>